<sequence length="544" mass="57211">MAAKDVRFGNDARVKMLEGVNILADAVKVTLGPKGRNVVLDKSFGAPTITKDGVSVAREIELEDKFQNMGAQMVKEVASQANDAAGDGTTTATVLAQAIVNEGLKAVAAGMNPMDLKRGIDKAVIAAVEELKALSVPCADTKAIAQVGTISANSDSSVGNIIAEAMEKVGRDGVITVEEGQALQDELDVVEGMQFDRGYLSPYFINNQESGSVELDNPFILLVDKKISNIRELLPVLEGVAKASRPLLIVAEDVEGEALATLVVNNMRGIVKVAAVKAPGFGDRRKAMLQDIAILTGGVVISEEIGLELEKATLEDLGQAKRVSITKENSTIIDGAGDQAAIQGRVAQIRQQIEEATSDYDKEKLQERVAKLAGGVAVIKVGAATEVEMKEKKDRVEDALHATRAAVEEGVVAGGGVALIRAASKLSSLVGDNEEQNVGIRVALRAMEAPLRQIVKNAGDEESVVANNVRAGEGNYGYNAATGVYDDMIEMGILDPTKVTRSALQFAASVAGLMITTEAMITELPKKDAPAMPDMGMGGMGGMM</sequence>
<protein>
    <recommendedName>
        <fullName evidence="1">Chaperonin GroEL 2</fullName>
        <ecNumber evidence="1">5.6.1.7</ecNumber>
    </recommendedName>
    <alternativeName>
        <fullName evidence="1">60 kDa chaperonin 2</fullName>
    </alternativeName>
    <alternativeName>
        <fullName evidence="1">Chaperonin-60 2</fullName>
        <shortName evidence="1">Cpn60 2</shortName>
    </alternativeName>
</protein>
<organism>
    <name type="scientific">Vibrio cholerae serotype O1 (strain ATCC 39541 / Classical Ogawa 395 / O395)</name>
    <dbReference type="NCBI Taxonomy" id="345073"/>
    <lineage>
        <taxon>Bacteria</taxon>
        <taxon>Pseudomonadati</taxon>
        <taxon>Pseudomonadota</taxon>
        <taxon>Gammaproteobacteria</taxon>
        <taxon>Vibrionales</taxon>
        <taxon>Vibrionaceae</taxon>
        <taxon>Vibrio</taxon>
    </lineage>
</organism>
<name>CH602_VIBC3</name>
<proteinExistence type="inferred from homology"/>
<accession>A5F4Y1</accession>
<accession>C3LXR2</accession>
<feature type="chain" id="PRO_0000332100" description="Chaperonin GroEL 2">
    <location>
        <begin position="1"/>
        <end position="544"/>
    </location>
</feature>
<feature type="binding site" evidence="1">
    <location>
        <begin position="30"/>
        <end position="33"/>
    </location>
    <ligand>
        <name>ATP</name>
        <dbReference type="ChEBI" id="CHEBI:30616"/>
    </ligand>
</feature>
<feature type="binding site" evidence="1">
    <location>
        <position position="51"/>
    </location>
    <ligand>
        <name>ATP</name>
        <dbReference type="ChEBI" id="CHEBI:30616"/>
    </ligand>
</feature>
<feature type="binding site" evidence="1">
    <location>
        <begin position="87"/>
        <end position="91"/>
    </location>
    <ligand>
        <name>ATP</name>
        <dbReference type="ChEBI" id="CHEBI:30616"/>
    </ligand>
</feature>
<feature type="binding site" evidence="1">
    <location>
        <position position="415"/>
    </location>
    <ligand>
        <name>ATP</name>
        <dbReference type="ChEBI" id="CHEBI:30616"/>
    </ligand>
</feature>
<feature type="binding site" evidence="1">
    <location>
        <begin position="479"/>
        <end position="481"/>
    </location>
    <ligand>
        <name>ATP</name>
        <dbReference type="ChEBI" id="CHEBI:30616"/>
    </ligand>
</feature>
<feature type="binding site" evidence="1">
    <location>
        <position position="495"/>
    </location>
    <ligand>
        <name>ATP</name>
        <dbReference type="ChEBI" id="CHEBI:30616"/>
    </ligand>
</feature>
<dbReference type="EC" id="5.6.1.7" evidence="1"/>
<dbReference type="EMBL" id="CP000627">
    <property type="protein sequence ID" value="ABQ21950.1"/>
    <property type="molecule type" value="Genomic_DNA"/>
</dbReference>
<dbReference type="EMBL" id="CP001235">
    <property type="protein sequence ID" value="ACP10762.1"/>
    <property type="molecule type" value="Genomic_DNA"/>
</dbReference>
<dbReference type="SMR" id="A5F4Y1"/>
<dbReference type="KEGG" id="vco:VC0395_A2237"/>
<dbReference type="KEGG" id="vcr:VC395_2777"/>
<dbReference type="PATRIC" id="fig|345073.21.peg.2674"/>
<dbReference type="eggNOG" id="COG0459">
    <property type="taxonomic scope" value="Bacteria"/>
</dbReference>
<dbReference type="HOGENOM" id="CLU_016503_3_0_6"/>
<dbReference type="OrthoDB" id="9766614at2"/>
<dbReference type="Proteomes" id="UP000000249">
    <property type="component" value="Chromosome 2"/>
</dbReference>
<dbReference type="GO" id="GO:0005737">
    <property type="term" value="C:cytoplasm"/>
    <property type="evidence" value="ECO:0007669"/>
    <property type="project" value="UniProtKB-SubCell"/>
</dbReference>
<dbReference type="GO" id="GO:0005524">
    <property type="term" value="F:ATP binding"/>
    <property type="evidence" value="ECO:0007669"/>
    <property type="project" value="UniProtKB-UniRule"/>
</dbReference>
<dbReference type="GO" id="GO:0140662">
    <property type="term" value="F:ATP-dependent protein folding chaperone"/>
    <property type="evidence" value="ECO:0007669"/>
    <property type="project" value="InterPro"/>
</dbReference>
<dbReference type="GO" id="GO:0016853">
    <property type="term" value="F:isomerase activity"/>
    <property type="evidence" value="ECO:0007669"/>
    <property type="project" value="UniProtKB-KW"/>
</dbReference>
<dbReference type="GO" id="GO:0051082">
    <property type="term" value="F:unfolded protein binding"/>
    <property type="evidence" value="ECO:0007669"/>
    <property type="project" value="UniProtKB-UniRule"/>
</dbReference>
<dbReference type="GO" id="GO:0042026">
    <property type="term" value="P:protein refolding"/>
    <property type="evidence" value="ECO:0007669"/>
    <property type="project" value="UniProtKB-UniRule"/>
</dbReference>
<dbReference type="CDD" id="cd03344">
    <property type="entry name" value="GroEL"/>
    <property type="match status" value="1"/>
</dbReference>
<dbReference type="FunFam" id="1.10.560.10:FF:000001">
    <property type="entry name" value="60 kDa chaperonin"/>
    <property type="match status" value="1"/>
</dbReference>
<dbReference type="FunFam" id="3.50.7.10:FF:000001">
    <property type="entry name" value="60 kDa chaperonin"/>
    <property type="match status" value="1"/>
</dbReference>
<dbReference type="Gene3D" id="3.50.7.10">
    <property type="entry name" value="GroEL"/>
    <property type="match status" value="1"/>
</dbReference>
<dbReference type="Gene3D" id="1.10.560.10">
    <property type="entry name" value="GroEL-like equatorial domain"/>
    <property type="match status" value="1"/>
</dbReference>
<dbReference type="Gene3D" id="3.30.260.10">
    <property type="entry name" value="TCP-1-like chaperonin intermediate domain"/>
    <property type="match status" value="1"/>
</dbReference>
<dbReference type="HAMAP" id="MF_00600">
    <property type="entry name" value="CH60"/>
    <property type="match status" value="1"/>
</dbReference>
<dbReference type="InterPro" id="IPR018370">
    <property type="entry name" value="Chaperonin_Cpn60_CS"/>
</dbReference>
<dbReference type="InterPro" id="IPR001844">
    <property type="entry name" value="Cpn60/GroEL"/>
</dbReference>
<dbReference type="InterPro" id="IPR002423">
    <property type="entry name" value="Cpn60/GroEL/TCP-1"/>
</dbReference>
<dbReference type="InterPro" id="IPR027409">
    <property type="entry name" value="GroEL-like_apical_dom_sf"/>
</dbReference>
<dbReference type="InterPro" id="IPR027413">
    <property type="entry name" value="GROEL-like_equatorial_sf"/>
</dbReference>
<dbReference type="InterPro" id="IPR027410">
    <property type="entry name" value="TCP-1-like_intermed_sf"/>
</dbReference>
<dbReference type="NCBIfam" id="TIGR02348">
    <property type="entry name" value="GroEL"/>
    <property type="match status" value="1"/>
</dbReference>
<dbReference type="NCBIfam" id="NF000592">
    <property type="entry name" value="PRK00013.1"/>
    <property type="match status" value="1"/>
</dbReference>
<dbReference type="NCBIfam" id="NF009487">
    <property type="entry name" value="PRK12849.1"/>
    <property type="match status" value="1"/>
</dbReference>
<dbReference type="NCBIfam" id="NF009488">
    <property type="entry name" value="PRK12850.1"/>
    <property type="match status" value="1"/>
</dbReference>
<dbReference type="NCBIfam" id="NF009489">
    <property type="entry name" value="PRK12851.1"/>
    <property type="match status" value="1"/>
</dbReference>
<dbReference type="PANTHER" id="PTHR45633">
    <property type="entry name" value="60 KDA HEAT SHOCK PROTEIN, MITOCHONDRIAL"/>
    <property type="match status" value="1"/>
</dbReference>
<dbReference type="Pfam" id="PF00118">
    <property type="entry name" value="Cpn60_TCP1"/>
    <property type="match status" value="1"/>
</dbReference>
<dbReference type="PRINTS" id="PR00298">
    <property type="entry name" value="CHAPERONIN60"/>
</dbReference>
<dbReference type="SUPFAM" id="SSF52029">
    <property type="entry name" value="GroEL apical domain-like"/>
    <property type="match status" value="1"/>
</dbReference>
<dbReference type="SUPFAM" id="SSF48592">
    <property type="entry name" value="GroEL equatorial domain-like"/>
    <property type="match status" value="1"/>
</dbReference>
<dbReference type="SUPFAM" id="SSF54849">
    <property type="entry name" value="GroEL-intermediate domain like"/>
    <property type="match status" value="1"/>
</dbReference>
<dbReference type="PROSITE" id="PS00296">
    <property type="entry name" value="CHAPERONINS_CPN60"/>
    <property type="match status" value="1"/>
</dbReference>
<reference key="1">
    <citation type="submission" date="2007-03" db="EMBL/GenBank/DDBJ databases">
        <authorList>
            <person name="Heidelberg J."/>
        </authorList>
    </citation>
    <scope>NUCLEOTIDE SEQUENCE [LARGE SCALE GENOMIC DNA]</scope>
    <source>
        <strain>ATCC 39541 / Classical Ogawa 395 / O395</strain>
    </source>
</reference>
<reference key="2">
    <citation type="journal article" date="2008" name="PLoS ONE">
        <title>A recalibrated molecular clock and independent origins for the cholera pandemic clones.</title>
        <authorList>
            <person name="Feng L."/>
            <person name="Reeves P.R."/>
            <person name="Lan R."/>
            <person name="Ren Y."/>
            <person name="Gao C."/>
            <person name="Zhou Z."/>
            <person name="Ren Y."/>
            <person name="Cheng J."/>
            <person name="Wang W."/>
            <person name="Wang J."/>
            <person name="Qian W."/>
            <person name="Li D."/>
            <person name="Wang L."/>
        </authorList>
    </citation>
    <scope>NUCLEOTIDE SEQUENCE [LARGE SCALE GENOMIC DNA]</scope>
    <source>
        <strain>ATCC 39541 / Classical Ogawa 395 / O395</strain>
    </source>
</reference>
<comment type="function">
    <text evidence="1">Together with its co-chaperonin GroES, plays an essential role in assisting protein folding. The GroEL-GroES system forms a nano-cage that allows encapsulation of the non-native substrate proteins and provides a physical environment optimized to promote and accelerate protein folding.</text>
</comment>
<comment type="catalytic activity">
    <reaction evidence="1">
        <text>ATP + H2O + a folded polypeptide = ADP + phosphate + an unfolded polypeptide.</text>
        <dbReference type="EC" id="5.6.1.7"/>
    </reaction>
</comment>
<comment type="subunit">
    <text evidence="1">Forms a cylinder of 14 subunits composed of two heptameric rings stacked back-to-back. Interacts with the co-chaperonin GroES.</text>
</comment>
<comment type="subcellular location">
    <subcellularLocation>
        <location evidence="1">Cytoplasm</location>
    </subcellularLocation>
</comment>
<comment type="similarity">
    <text evidence="1">Belongs to the chaperonin (HSP60) family.</text>
</comment>
<evidence type="ECO:0000255" key="1">
    <source>
        <dbReference type="HAMAP-Rule" id="MF_00600"/>
    </source>
</evidence>
<keyword id="KW-0067">ATP-binding</keyword>
<keyword id="KW-0143">Chaperone</keyword>
<keyword id="KW-0963">Cytoplasm</keyword>
<keyword id="KW-0413">Isomerase</keyword>
<keyword id="KW-0547">Nucleotide-binding</keyword>
<gene>
    <name evidence="1" type="primary">groEL2</name>
    <name evidence="1" type="synonym">groL2</name>
    <name type="ordered locus">VC0395_A2237</name>
    <name type="ordered locus">VC395_2777</name>
</gene>